<dbReference type="EC" id="2.8.1.8" evidence="1"/>
<dbReference type="EMBL" id="KN305539">
    <property type="protein sequence ID" value="EEH23513.1"/>
    <property type="molecule type" value="Genomic_DNA"/>
</dbReference>
<dbReference type="SMR" id="C0SDG9"/>
<dbReference type="VEuPathDB" id="FungiDB:PABG_05724"/>
<dbReference type="HOGENOM" id="CLU_033144_0_0_1"/>
<dbReference type="OrthoDB" id="12729at33183"/>
<dbReference type="UniPathway" id="UPA00538">
    <property type="reaction ID" value="UER00593"/>
</dbReference>
<dbReference type="GO" id="GO:0005739">
    <property type="term" value="C:mitochondrion"/>
    <property type="evidence" value="ECO:0007669"/>
    <property type="project" value="UniProtKB-SubCell"/>
</dbReference>
<dbReference type="GO" id="GO:0051539">
    <property type="term" value="F:4 iron, 4 sulfur cluster binding"/>
    <property type="evidence" value="ECO:0007669"/>
    <property type="project" value="UniProtKB-UniRule"/>
</dbReference>
<dbReference type="GO" id="GO:0016992">
    <property type="term" value="F:lipoate synthase activity"/>
    <property type="evidence" value="ECO:0007669"/>
    <property type="project" value="UniProtKB-UniRule"/>
</dbReference>
<dbReference type="GO" id="GO:0046872">
    <property type="term" value="F:metal ion binding"/>
    <property type="evidence" value="ECO:0007669"/>
    <property type="project" value="UniProtKB-KW"/>
</dbReference>
<dbReference type="CDD" id="cd01335">
    <property type="entry name" value="Radical_SAM"/>
    <property type="match status" value="1"/>
</dbReference>
<dbReference type="FunFam" id="3.20.20.70:FF:000036">
    <property type="entry name" value="Lipoyl synthase, mitochondrial"/>
    <property type="match status" value="1"/>
</dbReference>
<dbReference type="Gene3D" id="3.20.20.70">
    <property type="entry name" value="Aldolase class I"/>
    <property type="match status" value="1"/>
</dbReference>
<dbReference type="HAMAP" id="MF_00206">
    <property type="entry name" value="Lipoyl_synth"/>
    <property type="match status" value="1"/>
</dbReference>
<dbReference type="InterPro" id="IPR013785">
    <property type="entry name" value="Aldolase_TIM"/>
</dbReference>
<dbReference type="InterPro" id="IPR006638">
    <property type="entry name" value="Elp3/MiaA/NifB-like_rSAM"/>
</dbReference>
<dbReference type="InterPro" id="IPR031691">
    <property type="entry name" value="LIAS_N"/>
</dbReference>
<dbReference type="InterPro" id="IPR003698">
    <property type="entry name" value="Lipoyl_synth"/>
</dbReference>
<dbReference type="InterPro" id="IPR007197">
    <property type="entry name" value="rSAM"/>
</dbReference>
<dbReference type="NCBIfam" id="TIGR00510">
    <property type="entry name" value="lipA"/>
    <property type="match status" value="1"/>
</dbReference>
<dbReference type="NCBIfam" id="NF004019">
    <property type="entry name" value="PRK05481.1"/>
    <property type="match status" value="1"/>
</dbReference>
<dbReference type="NCBIfam" id="NF009544">
    <property type="entry name" value="PRK12928.1"/>
    <property type="match status" value="1"/>
</dbReference>
<dbReference type="PANTHER" id="PTHR10949">
    <property type="entry name" value="LIPOYL SYNTHASE"/>
    <property type="match status" value="1"/>
</dbReference>
<dbReference type="PANTHER" id="PTHR10949:SF0">
    <property type="entry name" value="LIPOYL SYNTHASE, MITOCHONDRIAL"/>
    <property type="match status" value="1"/>
</dbReference>
<dbReference type="Pfam" id="PF16881">
    <property type="entry name" value="LIAS_N"/>
    <property type="match status" value="1"/>
</dbReference>
<dbReference type="Pfam" id="PF04055">
    <property type="entry name" value="Radical_SAM"/>
    <property type="match status" value="1"/>
</dbReference>
<dbReference type="SFLD" id="SFLDF00271">
    <property type="entry name" value="lipoyl_synthase"/>
    <property type="match status" value="1"/>
</dbReference>
<dbReference type="SFLD" id="SFLDS00029">
    <property type="entry name" value="Radical_SAM"/>
    <property type="match status" value="1"/>
</dbReference>
<dbReference type="SMART" id="SM00729">
    <property type="entry name" value="Elp3"/>
    <property type="match status" value="1"/>
</dbReference>
<dbReference type="SUPFAM" id="SSF102114">
    <property type="entry name" value="Radical SAM enzymes"/>
    <property type="match status" value="1"/>
</dbReference>
<dbReference type="PROSITE" id="PS51918">
    <property type="entry name" value="RADICAL_SAM"/>
    <property type="match status" value="1"/>
</dbReference>
<comment type="function">
    <text evidence="1">Catalyzes the radical-mediated insertion of two sulfur atoms into the C-6 and C-8 positions of the octanoyl moiety bound to the lipoyl domains of lipoate-dependent enzymes, thereby converting the octanoylated domains into lipoylated derivatives.</text>
</comment>
<comment type="catalytic activity">
    <reaction evidence="1">
        <text>[[Fe-S] cluster scaffold protein carrying a second [4Fe-4S](2+) cluster] + N(6)-octanoyl-L-lysyl-[protein] + 2 oxidized [2Fe-2S]-[ferredoxin] + 2 S-adenosyl-L-methionine + 4 H(+) = [[Fe-S] cluster scaffold protein] + N(6)-[(R)-dihydrolipoyl]-L-lysyl-[protein] + 4 Fe(3+) + 2 hydrogen sulfide + 2 5'-deoxyadenosine + 2 L-methionine + 2 reduced [2Fe-2S]-[ferredoxin]</text>
        <dbReference type="Rhea" id="RHEA:16585"/>
        <dbReference type="Rhea" id="RHEA-COMP:9928"/>
        <dbReference type="Rhea" id="RHEA-COMP:10000"/>
        <dbReference type="Rhea" id="RHEA-COMP:10001"/>
        <dbReference type="Rhea" id="RHEA-COMP:10475"/>
        <dbReference type="Rhea" id="RHEA-COMP:14568"/>
        <dbReference type="Rhea" id="RHEA-COMP:14569"/>
        <dbReference type="ChEBI" id="CHEBI:15378"/>
        <dbReference type="ChEBI" id="CHEBI:17319"/>
        <dbReference type="ChEBI" id="CHEBI:29034"/>
        <dbReference type="ChEBI" id="CHEBI:29919"/>
        <dbReference type="ChEBI" id="CHEBI:33722"/>
        <dbReference type="ChEBI" id="CHEBI:33737"/>
        <dbReference type="ChEBI" id="CHEBI:33738"/>
        <dbReference type="ChEBI" id="CHEBI:57844"/>
        <dbReference type="ChEBI" id="CHEBI:59789"/>
        <dbReference type="ChEBI" id="CHEBI:78809"/>
        <dbReference type="ChEBI" id="CHEBI:83100"/>
        <dbReference type="EC" id="2.8.1.8"/>
    </reaction>
</comment>
<comment type="cofactor">
    <cofactor evidence="1">
        <name>[4Fe-4S] cluster</name>
        <dbReference type="ChEBI" id="CHEBI:49883"/>
    </cofactor>
    <text evidence="1">Binds 2 [4Fe-4S] clusters per subunit. One cluster is coordinated with 3 cysteines and an exchangeable S-adenosyl-L-methionine.</text>
</comment>
<comment type="pathway">
    <text evidence="1">Protein modification; protein lipoylation via endogenous pathway; protein N(6)-(lipoyl)lysine from octanoyl-[acyl-carrier-protein]: step 2/2.</text>
</comment>
<comment type="subcellular location">
    <subcellularLocation>
        <location evidence="1">Mitochondrion</location>
    </subcellularLocation>
</comment>
<comment type="similarity">
    <text evidence="1">Belongs to the radical SAM superfamily. Lipoyl synthase family.</text>
</comment>
<evidence type="ECO:0000255" key="1">
    <source>
        <dbReference type="HAMAP-Rule" id="MF_03123"/>
    </source>
</evidence>
<evidence type="ECO:0000255" key="2">
    <source>
        <dbReference type="PROSITE-ProRule" id="PRU01266"/>
    </source>
</evidence>
<evidence type="ECO:0000256" key="3">
    <source>
        <dbReference type="SAM" id="MobiDB-lite"/>
    </source>
</evidence>
<proteinExistence type="inferred from homology"/>
<sequence>MAASARGLRTLQSAHSSTTVPRLQLAVSRCYATTTSPDPPITNSSNSSNSTPTPKQRITAFKDKLNAGPSFSDFVSGGGGGASNDRVPLDPAEAYALKTALVGPPGRKKQIIRLPSWLKTPIPDTPNYRRIKSDLRGLNLHTVCEEARCPNISDCWGGSSKSAATATIMLMGDTCTRGCRFCSVKTSRTPPPLDPHEPENTAEALSRWGLGYVVMTSVDRDDLADGGARHVAETVRKVKQKAPGILLECLTGDYAGDLEMVALVATSGLDVFAHNVETVEALTPFVRDRRATFQQSLRVLKAAKEARPELITKTSIMLGLGETETQLWETLRALRTVDVDVVTFGQYMRPTKRHMAVHEYVRPGVFDLWKERALEMGFLYCASGPLVRSSYKAGEAFIENVLKKRRGEGADGGDGGNSTRREDVERLVAGGVVR</sequence>
<organism>
    <name type="scientific">Paracoccidioides brasiliensis (strain Pb03)</name>
    <dbReference type="NCBI Taxonomy" id="482561"/>
    <lineage>
        <taxon>Eukaryota</taxon>
        <taxon>Fungi</taxon>
        <taxon>Dikarya</taxon>
        <taxon>Ascomycota</taxon>
        <taxon>Pezizomycotina</taxon>
        <taxon>Eurotiomycetes</taxon>
        <taxon>Eurotiomycetidae</taxon>
        <taxon>Onygenales</taxon>
        <taxon>Ajellomycetaceae</taxon>
        <taxon>Paracoccidioides</taxon>
    </lineage>
</organism>
<name>LIPA_PARBP</name>
<reference key="1">
    <citation type="journal article" date="2011" name="PLoS Genet.">
        <title>Comparative genomic analysis of human fungal pathogens causing paracoccidioidomycosis.</title>
        <authorList>
            <person name="Desjardins C.A."/>
            <person name="Champion M.D."/>
            <person name="Holder J.W."/>
            <person name="Muszewska A."/>
            <person name="Goldberg J."/>
            <person name="Bailao A.M."/>
            <person name="Brigido M.M."/>
            <person name="Ferreira M.E."/>
            <person name="Garcia A.M."/>
            <person name="Grynberg M."/>
            <person name="Gujja S."/>
            <person name="Heiman D.I."/>
            <person name="Henn M.R."/>
            <person name="Kodira C.D."/>
            <person name="Leon-Narvaez H."/>
            <person name="Longo L.V.G."/>
            <person name="Ma L.-J."/>
            <person name="Malavazi I."/>
            <person name="Matsuo A.L."/>
            <person name="Morais F.V."/>
            <person name="Pereira M."/>
            <person name="Rodriguez-Brito S."/>
            <person name="Sakthikumar S."/>
            <person name="Salem-Izacc S.M."/>
            <person name="Sykes S.M."/>
            <person name="Teixeira M.M."/>
            <person name="Vallejo M.C."/>
            <person name="Walter M.E."/>
            <person name="Yandava C."/>
            <person name="Young S."/>
            <person name="Zeng Q."/>
            <person name="Zucker J."/>
            <person name="Felipe M.S."/>
            <person name="Goldman G.H."/>
            <person name="Haas B.J."/>
            <person name="McEwen J.G."/>
            <person name="Nino-Vega G."/>
            <person name="Puccia R."/>
            <person name="San-Blas G."/>
            <person name="Soares C.M."/>
            <person name="Birren B.W."/>
            <person name="Cuomo C.A."/>
        </authorList>
    </citation>
    <scope>NUCLEOTIDE SEQUENCE [LARGE SCALE GENOMIC DNA]</scope>
    <source>
        <strain>Pb03</strain>
    </source>
</reference>
<accession>C0SDG9</accession>
<gene>
    <name type="ORF">PABG_05724</name>
</gene>
<protein>
    <recommendedName>
        <fullName evidence="1">Lipoyl synthase, mitochondrial</fullName>
        <ecNumber evidence="1">2.8.1.8</ecNumber>
    </recommendedName>
    <alternativeName>
        <fullName evidence="1">Lipoate synthase</fullName>
        <shortName evidence="1">LS</shortName>
        <shortName evidence="1">Lip-syn</shortName>
    </alternativeName>
    <alternativeName>
        <fullName evidence="1">Lipoic acid synthase</fullName>
    </alternativeName>
</protein>
<feature type="transit peptide" description="Mitochondrion" evidence="1">
    <location>
        <begin position="1"/>
        <end position="31"/>
    </location>
</feature>
<feature type="chain" id="PRO_0000398277" description="Lipoyl synthase, mitochondrial">
    <location>
        <begin position="32"/>
        <end position="434"/>
    </location>
</feature>
<feature type="domain" description="Radical SAM core" evidence="2">
    <location>
        <begin position="158"/>
        <end position="379"/>
    </location>
</feature>
<feature type="region of interest" description="Disordered" evidence="3">
    <location>
        <begin position="34"/>
        <end position="55"/>
    </location>
</feature>
<feature type="compositionally biased region" description="Low complexity" evidence="3">
    <location>
        <begin position="34"/>
        <end position="54"/>
    </location>
</feature>
<feature type="binding site" evidence="1">
    <location>
        <position position="144"/>
    </location>
    <ligand>
        <name>[4Fe-4S] cluster</name>
        <dbReference type="ChEBI" id="CHEBI:49883"/>
        <label>1</label>
    </ligand>
</feature>
<feature type="binding site" evidence="1">
    <location>
        <position position="149"/>
    </location>
    <ligand>
        <name>[4Fe-4S] cluster</name>
        <dbReference type="ChEBI" id="CHEBI:49883"/>
        <label>1</label>
    </ligand>
</feature>
<feature type="binding site" evidence="1">
    <location>
        <position position="155"/>
    </location>
    <ligand>
        <name>[4Fe-4S] cluster</name>
        <dbReference type="ChEBI" id="CHEBI:49883"/>
        <label>1</label>
    </ligand>
</feature>
<feature type="binding site" evidence="1">
    <location>
        <position position="175"/>
    </location>
    <ligand>
        <name>[4Fe-4S] cluster</name>
        <dbReference type="ChEBI" id="CHEBI:49883"/>
        <label>2</label>
        <note>4Fe-4S-S-AdoMet</note>
    </ligand>
</feature>
<feature type="binding site" evidence="1">
    <location>
        <position position="179"/>
    </location>
    <ligand>
        <name>[4Fe-4S] cluster</name>
        <dbReference type="ChEBI" id="CHEBI:49883"/>
        <label>2</label>
        <note>4Fe-4S-S-AdoMet</note>
    </ligand>
</feature>
<feature type="binding site" evidence="1">
    <location>
        <position position="182"/>
    </location>
    <ligand>
        <name>[4Fe-4S] cluster</name>
        <dbReference type="ChEBI" id="CHEBI:49883"/>
        <label>2</label>
        <note>4Fe-4S-S-AdoMet</note>
    </ligand>
</feature>
<feature type="binding site" evidence="1">
    <location>
        <position position="390"/>
    </location>
    <ligand>
        <name>[4Fe-4S] cluster</name>
        <dbReference type="ChEBI" id="CHEBI:49883"/>
        <label>1</label>
    </ligand>
</feature>
<keyword id="KW-0004">4Fe-4S</keyword>
<keyword id="KW-0408">Iron</keyword>
<keyword id="KW-0411">Iron-sulfur</keyword>
<keyword id="KW-0479">Metal-binding</keyword>
<keyword id="KW-0496">Mitochondrion</keyword>
<keyword id="KW-0949">S-adenosyl-L-methionine</keyword>
<keyword id="KW-0808">Transferase</keyword>
<keyword id="KW-0809">Transit peptide</keyword>